<proteinExistence type="inferred from homology"/>
<protein>
    <recommendedName>
        <fullName evidence="1">Holo-[acyl-carrier-protein] synthase</fullName>
        <shortName evidence="1">Holo-ACP synthase</shortName>
        <ecNumber evidence="1">2.7.8.7</ecNumber>
    </recommendedName>
    <alternativeName>
        <fullName evidence="1">4'-phosphopantetheinyl transferase AcpS</fullName>
    </alternativeName>
</protein>
<gene>
    <name evidence="1" type="primary">acpS</name>
    <name type="ordered locus">Jann_0520</name>
</gene>
<sequence length="150" mass="16809">MILGIGTDLANIERIEGTLERFGDRFRNRVFTDREQARAERMPEPAAVYAKRWAAKEACSKALGTGLRMGIAWKDMSVRNLRTGQPVMEVTGWARERLDQMTPDGYGAVIHVTLTDDHPWAQAMVVIEALTPEEAELRPDLGPAARRTMS</sequence>
<organism>
    <name type="scientific">Jannaschia sp. (strain CCS1)</name>
    <dbReference type="NCBI Taxonomy" id="290400"/>
    <lineage>
        <taxon>Bacteria</taxon>
        <taxon>Pseudomonadati</taxon>
        <taxon>Pseudomonadota</taxon>
        <taxon>Alphaproteobacteria</taxon>
        <taxon>Rhodobacterales</taxon>
        <taxon>Roseobacteraceae</taxon>
        <taxon>Jannaschia</taxon>
    </lineage>
</organism>
<comment type="function">
    <text evidence="1">Transfers the 4'-phosphopantetheine moiety from coenzyme A to a Ser of acyl-carrier-protein.</text>
</comment>
<comment type="catalytic activity">
    <reaction evidence="1">
        <text>apo-[ACP] + CoA = holo-[ACP] + adenosine 3',5'-bisphosphate + H(+)</text>
        <dbReference type="Rhea" id="RHEA:12068"/>
        <dbReference type="Rhea" id="RHEA-COMP:9685"/>
        <dbReference type="Rhea" id="RHEA-COMP:9690"/>
        <dbReference type="ChEBI" id="CHEBI:15378"/>
        <dbReference type="ChEBI" id="CHEBI:29999"/>
        <dbReference type="ChEBI" id="CHEBI:57287"/>
        <dbReference type="ChEBI" id="CHEBI:58343"/>
        <dbReference type="ChEBI" id="CHEBI:64479"/>
        <dbReference type="EC" id="2.7.8.7"/>
    </reaction>
</comment>
<comment type="cofactor">
    <cofactor evidence="1">
        <name>Mg(2+)</name>
        <dbReference type="ChEBI" id="CHEBI:18420"/>
    </cofactor>
</comment>
<comment type="subcellular location">
    <subcellularLocation>
        <location evidence="1">Cytoplasm</location>
    </subcellularLocation>
</comment>
<comment type="similarity">
    <text evidence="1">Belongs to the P-Pant transferase superfamily. AcpS family.</text>
</comment>
<name>ACPS_JANSC</name>
<keyword id="KW-0963">Cytoplasm</keyword>
<keyword id="KW-0275">Fatty acid biosynthesis</keyword>
<keyword id="KW-0276">Fatty acid metabolism</keyword>
<keyword id="KW-0444">Lipid biosynthesis</keyword>
<keyword id="KW-0443">Lipid metabolism</keyword>
<keyword id="KW-0460">Magnesium</keyword>
<keyword id="KW-0479">Metal-binding</keyword>
<keyword id="KW-1185">Reference proteome</keyword>
<keyword id="KW-0808">Transferase</keyword>
<dbReference type="EC" id="2.7.8.7" evidence="1"/>
<dbReference type="EMBL" id="CP000264">
    <property type="protein sequence ID" value="ABD53437.1"/>
    <property type="molecule type" value="Genomic_DNA"/>
</dbReference>
<dbReference type="RefSeq" id="WP_011453646.1">
    <property type="nucleotide sequence ID" value="NC_007802.1"/>
</dbReference>
<dbReference type="SMR" id="Q28V25"/>
<dbReference type="STRING" id="290400.Jann_0520"/>
<dbReference type="KEGG" id="jan:Jann_0520"/>
<dbReference type="eggNOG" id="COG0736">
    <property type="taxonomic scope" value="Bacteria"/>
</dbReference>
<dbReference type="HOGENOM" id="CLU_089696_0_2_5"/>
<dbReference type="OrthoDB" id="517356at2"/>
<dbReference type="Proteomes" id="UP000008326">
    <property type="component" value="Chromosome"/>
</dbReference>
<dbReference type="GO" id="GO:0005737">
    <property type="term" value="C:cytoplasm"/>
    <property type="evidence" value="ECO:0007669"/>
    <property type="project" value="UniProtKB-SubCell"/>
</dbReference>
<dbReference type="GO" id="GO:0008897">
    <property type="term" value="F:holo-[acyl-carrier-protein] synthase activity"/>
    <property type="evidence" value="ECO:0007669"/>
    <property type="project" value="UniProtKB-UniRule"/>
</dbReference>
<dbReference type="GO" id="GO:0000287">
    <property type="term" value="F:magnesium ion binding"/>
    <property type="evidence" value="ECO:0007669"/>
    <property type="project" value="UniProtKB-UniRule"/>
</dbReference>
<dbReference type="GO" id="GO:0006633">
    <property type="term" value="P:fatty acid biosynthetic process"/>
    <property type="evidence" value="ECO:0007669"/>
    <property type="project" value="UniProtKB-UniRule"/>
</dbReference>
<dbReference type="Gene3D" id="3.90.470.20">
    <property type="entry name" value="4'-phosphopantetheinyl transferase domain"/>
    <property type="match status" value="1"/>
</dbReference>
<dbReference type="HAMAP" id="MF_00101">
    <property type="entry name" value="AcpS"/>
    <property type="match status" value="1"/>
</dbReference>
<dbReference type="InterPro" id="IPR008278">
    <property type="entry name" value="4-PPantetheinyl_Trfase_dom"/>
</dbReference>
<dbReference type="InterPro" id="IPR037143">
    <property type="entry name" value="4-PPantetheinyl_Trfase_dom_sf"/>
</dbReference>
<dbReference type="InterPro" id="IPR002582">
    <property type="entry name" value="ACPS"/>
</dbReference>
<dbReference type="InterPro" id="IPR004568">
    <property type="entry name" value="Ppantetheine-prot_Trfase_dom"/>
</dbReference>
<dbReference type="NCBIfam" id="TIGR00516">
    <property type="entry name" value="acpS"/>
    <property type="match status" value="1"/>
</dbReference>
<dbReference type="NCBIfam" id="TIGR00556">
    <property type="entry name" value="pantethn_trn"/>
    <property type="match status" value="1"/>
</dbReference>
<dbReference type="Pfam" id="PF01648">
    <property type="entry name" value="ACPS"/>
    <property type="match status" value="1"/>
</dbReference>
<dbReference type="SUPFAM" id="SSF56214">
    <property type="entry name" value="4'-phosphopantetheinyl transferase"/>
    <property type="match status" value="1"/>
</dbReference>
<reference key="1">
    <citation type="submission" date="2006-02" db="EMBL/GenBank/DDBJ databases">
        <title>Complete sequence of chromosome of Jannaschia sp. CCS1.</title>
        <authorList>
            <consortium name="US DOE Joint Genome Institute"/>
            <person name="Copeland A."/>
            <person name="Lucas S."/>
            <person name="Lapidus A."/>
            <person name="Barry K."/>
            <person name="Detter J.C."/>
            <person name="Glavina del Rio T."/>
            <person name="Hammon N."/>
            <person name="Israni S."/>
            <person name="Pitluck S."/>
            <person name="Brettin T."/>
            <person name="Bruce D."/>
            <person name="Han C."/>
            <person name="Tapia R."/>
            <person name="Gilna P."/>
            <person name="Chertkov O."/>
            <person name="Saunders E."/>
            <person name="Schmutz J."/>
            <person name="Larimer F."/>
            <person name="Land M."/>
            <person name="Kyrpides N."/>
            <person name="Lykidis A."/>
            <person name="Moran M.A."/>
            <person name="Belas R."/>
            <person name="Ye W."/>
            <person name="Buchan A."/>
            <person name="Gonzalez J.M."/>
            <person name="Schell M.A."/>
            <person name="Richardson P."/>
        </authorList>
    </citation>
    <scope>NUCLEOTIDE SEQUENCE [LARGE SCALE GENOMIC DNA]</scope>
    <source>
        <strain>CCS1</strain>
    </source>
</reference>
<accession>Q28V25</accession>
<feature type="chain" id="PRO_1000008434" description="Holo-[acyl-carrier-protein] synthase">
    <location>
        <begin position="1"/>
        <end position="150"/>
    </location>
</feature>
<feature type="binding site" evidence="1">
    <location>
        <position position="8"/>
    </location>
    <ligand>
        <name>Mg(2+)</name>
        <dbReference type="ChEBI" id="CHEBI:18420"/>
    </ligand>
</feature>
<feature type="binding site" evidence="1">
    <location>
        <position position="57"/>
    </location>
    <ligand>
        <name>Mg(2+)</name>
        <dbReference type="ChEBI" id="CHEBI:18420"/>
    </ligand>
</feature>
<evidence type="ECO:0000255" key="1">
    <source>
        <dbReference type="HAMAP-Rule" id="MF_00101"/>
    </source>
</evidence>